<sequence>MTNPRETIPPGNSGEETIEEAFDWLDRTVEAINREAVNHLPRELIFQVWQRSWRYWHDEQGMSRSYTKYRYLCLMQKAVFMHFKKGCTCRGEGHGPGGWRSGPPPPPPPGLV</sequence>
<reference key="1">
    <citation type="journal article" date="1989" name="Proc. Natl. Acad. Sci. U.S.A.">
        <title>Molecular and biological characterization of a replication competent human immunodeficiency type 2 (HIV-2) proviral clone.</title>
        <authorList>
            <person name="Franchini G."/>
            <person name="Fargnoli K.A."/>
            <person name="Giombini F."/>
            <person name="Jagodzinski L.L."/>
            <person name="de Rossi A."/>
            <person name="Bosch M."/>
            <person name="Biberfeld G."/>
            <person name="Fenyo A.M."/>
            <person name="Albert J."/>
            <person name="Gallo R.C."/>
            <person name="Wong-Staal F."/>
        </authorList>
    </citation>
    <scope>NUCLEOTIDE SEQUENCE [GENOMIC DNA]</scope>
</reference>
<reference key="2">
    <citation type="journal article" date="2020" name="Mol. Biol. Cell">
        <title>Viral protein X unlocks the nuclear pore complex through a human Nup153-dependent pathway to promote nuclear translocation of the lentiviral genome.</title>
        <authorList>
            <person name="Singh S.P."/>
            <person name="Raja S."/>
            <person name="Mahalingam S."/>
        </authorList>
    </citation>
    <scope>INTERACTION WITH HUMAN NUP153</scope>
</reference>
<gene>
    <name type="primary">vpx</name>
</gene>
<name>VPX_HV2SB</name>
<evidence type="ECO:0000250" key="1"/>
<evidence type="ECO:0000250" key="2">
    <source>
        <dbReference type="UniProtKB" id="P18099"/>
    </source>
</evidence>
<evidence type="ECO:0000250" key="3">
    <source>
        <dbReference type="UniProtKB" id="P19508"/>
    </source>
</evidence>
<evidence type="ECO:0000256" key="4">
    <source>
        <dbReference type="SAM" id="MobiDB-lite"/>
    </source>
</evidence>
<evidence type="ECO:0000269" key="5">
    <source>
    </source>
</evidence>
<evidence type="ECO:0000305" key="6"/>
<accession>P12454</accession>
<comment type="function">
    <text evidence="1">Plays a role in nuclear translocation of the viral pre-integration complex (PIC), thus is required for the virus to infect non-dividing cells. Targets specific host proteins for degradation by the 26S proteasome. Acts by associating with the cellular CUL4A-DDB1 E3 ligase complex through direct interaction with host VPRPB/DCAF-1. This change in the E3 ligase substrate specificity results in the degradation of host SAMHD1. In turn, SAMHD1 depletion allows viral replication in host myeloid cells by preventing SAMHD1-mediated hydrolysis of intracellular dNTPs necessary for reverse transcription (By similarity).</text>
</comment>
<comment type="subunit">
    <text evidence="1 2 5">Interacts with the P6 region of unprocessed GAG (By similarity). Interacts with host VPRBP/DCAF1, leading to change substrate specificity of the CUL4A-DDB1 E3 ligase complex (By similarity). Interacts with host NUP153 (PubMed:31913756).</text>
</comment>
<comment type="subcellular location">
    <subcellularLocation>
        <location>Virion</location>
    </subcellularLocation>
    <subcellularLocation>
        <location>Host nucleus</location>
    </subcellularLocation>
    <text evidence="1">Nuclear just after virion uncoating, or if expressed in the absence of unprocessed GAG.</text>
</comment>
<comment type="similarity">
    <text evidence="6">Belongs to the lentivirus VPX protein family.</text>
</comment>
<dbReference type="EMBL" id="J04498">
    <property type="protein sequence ID" value="AAB00748.1"/>
    <property type="molecule type" value="Genomic_DNA"/>
</dbReference>
<dbReference type="SMR" id="P12454"/>
<dbReference type="Proteomes" id="UP000007427">
    <property type="component" value="Segment"/>
</dbReference>
<dbReference type="GO" id="GO:0042025">
    <property type="term" value="C:host cell nucleus"/>
    <property type="evidence" value="ECO:0007669"/>
    <property type="project" value="UniProtKB-SubCell"/>
</dbReference>
<dbReference type="GO" id="GO:0044423">
    <property type="term" value="C:virion component"/>
    <property type="evidence" value="ECO:0007669"/>
    <property type="project" value="UniProtKB-KW"/>
</dbReference>
<dbReference type="GO" id="GO:0052170">
    <property type="term" value="P:symbiont-mediated suppression of host innate immune response"/>
    <property type="evidence" value="ECO:0007669"/>
    <property type="project" value="UniProtKB-KW"/>
</dbReference>
<dbReference type="GO" id="GO:0019058">
    <property type="term" value="P:viral life cycle"/>
    <property type="evidence" value="ECO:0007669"/>
    <property type="project" value="InterPro"/>
</dbReference>
<dbReference type="Gene3D" id="1.20.5.4730">
    <property type="match status" value="1"/>
</dbReference>
<dbReference type="InterPro" id="IPR053711">
    <property type="entry name" value="Lentiviral_Vpx_assoc_factor"/>
</dbReference>
<dbReference type="InterPro" id="IPR000012">
    <property type="entry name" value="RetroV_VpR/X"/>
</dbReference>
<dbReference type="Pfam" id="PF00522">
    <property type="entry name" value="VPR"/>
    <property type="match status" value="1"/>
</dbReference>
<organismHost>
    <name type="scientific">Homo sapiens</name>
    <name type="common">Human</name>
    <dbReference type="NCBI Taxonomy" id="9606"/>
</organismHost>
<proteinExistence type="evidence at protein level"/>
<organism>
    <name type="scientific">Human immunodeficiency virus type 2 subtype A (isolate SBLISY)</name>
    <name type="common">HIV-2</name>
    <dbReference type="NCBI Taxonomy" id="11718"/>
    <lineage>
        <taxon>Viruses</taxon>
        <taxon>Riboviria</taxon>
        <taxon>Pararnavirae</taxon>
        <taxon>Artverviricota</taxon>
        <taxon>Revtraviricetes</taxon>
        <taxon>Ortervirales</taxon>
        <taxon>Retroviridae</taxon>
        <taxon>Orthoretrovirinae</taxon>
        <taxon>Lentivirus</taxon>
        <taxon>Human immunodeficiency virus 2</taxon>
    </lineage>
</organism>
<feature type="chain" id="PRO_0000085395" description="Protein Vpx">
    <location>
        <begin position="1"/>
        <end position="112"/>
    </location>
</feature>
<feature type="region of interest" description="Binds to human NUP153" evidence="3">
    <location>
        <begin position="61"/>
        <end position="80"/>
    </location>
</feature>
<feature type="region of interest" description="Disordered" evidence="4">
    <location>
        <begin position="92"/>
        <end position="112"/>
    </location>
</feature>
<feature type="short sequence motif" description="Nuclear localization signal" evidence="1">
    <location>
        <begin position="65"/>
        <end position="72"/>
    </location>
</feature>
<feature type="compositionally biased region" description="Pro residues" evidence="4">
    <location>
        <begin position="102"/>
        <end position="112"/>
    </location>
</feature>
<keyword id="KW-0014">AIDS</keyword>
<keyword id="KW-1048">Host nucleus</keyword>
<keyword id="KW-0945">Host-virus interaction</keyword>
<keyword id="KW-1090">Inhibition of host innate immune response by virus</keyword>
<keyword id="KW-0899">Viral immunoevasion</keyword>
<keyword id="KW-0946">Virion</keyword>
<protein>
    <recommendedName>
        <fullName>Protein Vpx</fullName>
    </recommendedName>
    <alternativeName>
        <fullName>Viral protein X</fullName>
    </alternativeName>
    <alternativeName>
        <fullName>X ORF protein</fullName>
    </alternativeName>
</protein>